<sequence>MKAGSFYKLGLLVASAVLVAACSKTPGSADGGAAVGDGDATAQGLGQMTHFAGQEPGESYTTQAPHNQLYLFAYDDSTLASKYLPSVNAQAEYLKTHPGARVMIAGHTDERGSREYNVALGERRADTVAEILRMAGVSRQQIRVVSYGKERPANYGHDEASHAQNRRVEFIYEATR</sequence>
<proteinExistence type="inferred from homology"/>
<evidence type="ECO:0000255" key="1">
    <source>
        <dbReference type="HAMAP-Rule" id="MF_02204"/>
    </source>
</evidence>
<dbReference type="EMBL" id="X60543">
    <property type="protein sequence ID" value="CAA43033.1"/>
    <property type="molecule type" value="Genomic_DNA"/>
</dbReference>
<dbReference type="PIR" id="A60337">
    <property type="entry name" value="A60337"/>
</dbReference>
<dbReference type="RefSeq" id="WP_010947759.1">
    <property type="nucleotide sequence ID" value="NZ_UGOV01000002.1"/>
</dbReference>
<dbReference type="SMR" id="P26493"/>
<dbReference type="STRING" id="91892.BIZ52_10025"/>
<dbReference type="GeneID" id="57036037"/>
<dbReference type="eggNOG" id="COG2885">
    <property type="taxonomic scope" value="Bacteria"/>
</dbReference>
<dbReference type="OMA" id="STESCWS"/>
<dbReference type="OrthoDB" id="9809164at2"/>
<dbReference type="GO" id="GO:0009279">
    <property type="term" value="C:cell outer membrane"/>
    <property type="evidence" value="ECO:0007669"/>
    <property type="project" value="UniProtKB-SubCell"/>
</dbReference>
<dbReference type="GO" id="GO:0051301">
    <property type="term" value="P:cell division"/>
    <property type="evidence" value="ECO:0007669"/>
    <property type="project" value="UniProtKB-UniRule"/>
</dbReference>
<dbReference type="CDD" id="cd07185">
    <property type="entry name" value="OmpA_C-like"/>
    <property type="match status" value="1"/>
</dbReference>
<dbReference type="Gene3D" id="3.30.1330.60">
    <property type="entry name" value="OmpA-like domain"/>
    <property type="match status" value="1"/>
</dbReference>
<dbReference type="HAMAP" id="MF_02204">
    <property type="entry name" value="Pal"/>
    <property type="match status" value="1"/>
</dbReference>
<dbReference type="InterPro" id="IPR050330">
    <property type="entry name" value="Bact_OuterMem_StrucFunc"/>
</dbReference>
<dbReference type="InterPro" id="IPR006664">
    <property type="entry name" value="OMP_bac"/>
</dbReference>
<dbReference type="InterPro" id="IPR006665">
    <property type="entry name" value="OmpA-like"/>
</dbReference>
<dbReference type="InterPro" id="IPR006690">
    <property type="entry name" value="OMPA-like_CS"/>
</dbReference>
<dbReference type="InterPro" id="IPR036737">
    <property type="entry name" value="OmpA-like_sf"/>
</dbReference>
<dbReference type="InterPro" id="IPR039001">
    <property type="entry name" value="Pal"/>
</dbReference>
<dbReference type="InterPro" id="IPR014169">
    <property type="entry name" value="Pal_lipo_C"/>
</dbReference>
<dbReference type="NCBIfam" id="TIGR02802">
    <property type="entry name" value="Pal_lipo"/>
    <property type="match status" value="1"/>
</dbReference>
<dbReference type="PANTHER" id="PTHR30329:SF21">
    <property type="entry name" value="LIPOPROTEIN YIAD-RELATED"/>
    <property type="match status" value="1"/>
</dbReference>
<dbReference type="PANTHER" id="PTHR30329">
    <property type="entry name" value="STATOR ELEMENT OF FLAGELLAR MOTOR COMPLEX"/>
    <property type="match status" value="1"/>
</dbReference>
<dbReference type="Pfam" id="PF00691">
    <property type="entry name" value="OmpA"/>
    <property type="match status" value="1"/>
</dbReference>
<dbReference type="PRINTS" id="PR01021">
    <property type="entry name" value="OMPADOMAIN"/>
</dbReference>
<dbReference type="SUPFAM" id="SSF103088">
    <property type="entry name" value="OmpA-like"/>
    <property type="match status" value="1"/>
</dbReference>
<dbReference type="PROSITE" id="PS01068">
    <property type="entry name" value="OMPA_1"/>
    <property type="match status" value="1"/>
</dbReference>
<dbReference type="PROSITE" id="PS51123">
    <property type="entry name" value="OMPA_2"/>
    <property type="match status" value="1"/>
</dbReference>
<dbReference type="PROSITE" id="PS51257">
    <property type="entry name" value="PROKAR_LIPOPROTEIN"/>
    <property type="match status" value="1"/>
</dbReference>
<feature type="signal peptide" evidence="1">
    <location>
        <begin position="1"/>
        <end position="21"/>
    </location>
</feature>
<feature type="chain" id="PRO_0000020124" description="Peptidoglycan-associated lipoprotein" evidence="1">
    <location>
        <begin position="22"/>
        <end position="176"/>
    </location>
</feature>
<feature type="domain" description="OmpA-like" evidence="1">
    <location>
        <begin position="60"/>
        <end position="176"/>
    </location>
</feature>
<feature type="lipid moiety-binding region" description="N-palmitoyl cysteine" evidence="1">
    <location>
        <position position="22"/>
    </location>
</feature>
<feature type="lipid moiety-binding region" description="S-diacylglycerol cysteine" evidence="1">
    <location>
        <position position="22"/>
    </location>
</feature>
<name>PAL_LEGPN</name>
<reference key="1">
    <citation type="journal article" date="1991" name="Mol. Microbiol.">
        <title>Characterization of a Legionella pneumophila gene encoding a lipoprotein antigen.</title>
        <authorList>
            <person name="Engleberg N.C."/>
            <person name="Howe D.C."/>
            <person name="Rogers J.E."/>
            <person name="Arroyo J."/>
            <person name="Eisenstein B.I."/>
        </authorList>
    </citation>
    <scope>NUCLEOTIDE SEQUENCE [GENOMIC DNA]</scope>
    <source>
        <strain>AA100 / Serogroup 1</strain>
    </source>
</reference>
<reference key="2">
    <citation type="journal article" date="1991" name="Infect. Immun.">
        <title>Cloning, genetic analysis, and nucleotide sequence of a determinant coding for a 19-kilodalton peptidoglycan-associated protein (Ppl) of Legionella pneumophila.</title>
        <authorList>
            <person name="Ludwig B."/>
            <person name="Schmid A."/>
            <person name="Marre R."/>
            <person name="Hacker J."/>
        </authorList>
    </citation>
    <scope>NUCLEOTIDE SEQUENCE [GENOMIC DNA]</scope>
</reference>
<protein>
    <recommendedName>
        <fullName evidence="1">Peptidoglycan-associated lipoprotein</fullName>
        <shortName evidence="1">PAL</shortName>
    </recommendedName>
    <alternativeName>
        <fullName>19 kDa surface antigen</fullName>
    </alternativeName>
    <alternativeName>
        <fullName>PPL</fullName>
    </alternativeName>
</protein>
<organism>
    <name type="scientific">Legionella pneumophila</name>
    <dbReference type="NCBI Taxonomy" id="446"/>
    <lineage>
        <taxon>Bacteria</taxon>
        <taxon>Pseudomonadati</taxon>
        <taxon>Pseudomonadota</taxon>
        <taxon>Gammaproteobacteria</taxon>
        <taxon>Legionellales</taxon>
        <taxon>Legionellaceae</taxon>
        <taxon>Legionella</taxon>
    </lineage>
</organism>
<accession>P26493</accession>
<comment type="function">
    <text evidence="1">Part of the Tol-Pal system, which plays a role in outer membrane invagination during cell division and is important for maintaining outer membrane integrity (By similarity). Very strongly associated with the peptidoglycan.</text>
</comment>
<comment type="subunit">
    <text evidence="1">The Tol-Pal system is composed of five core proteins: the inner membrane proteins TolA, TolQ and TolR, the periplasmic protein TolB and the outer membrane protein Pal. They form a network linking the inner and outer membranes and the peptidoglycan layer.</text>
</comment>
<comment type="subcellular location">
    <subcellularLocation>
        <location evidence="1">Cell outer membrane</location>
        <topology evidence="1">Lipid-anchor</topology>
    </subcellularLocation>
</comment>
<comment type="similarity">
    <text evidence="1">Belongs to the Pal lipoprotein family.</text>
</comment>
<gene>
    <name evidence="1" type="primary">pal</name>
    <name type="synonym">pplA</name>
</gene>
<keyword id="KW-0131">Cell cycle</keyword>
<keyword id="KW-0132">Cell division</keyword>
<keyword id="KW-0998">Cell outer membrane</keyword>
<keyword id="KW-0449">Lipoprotein</keyword>
<keyword id="KW-0472">Membrane</keyword>
<keyword id="KW-0564">Palmitate</keyword>
<keyword id="KW-0732">Signal</keyword>